<sequence>MKIKNSLKSLKTRHRENRLVRRKGRVYIINKSNPRFKARQG</sequence>
<gene>
    <name evidence="1" type="primary">rpmJ</name>
    <name type="ordered locus">NGR_c28320</name>
</gene>
<feature type="chain" id="PRO_1000196204" description="Large ribosomal subunit protein bL36">
    <location>
        <begin position="1"/>
        <end position="41"/>
    </location>
</feature>
<name>RL36_SINFN</name>
<comment type="similarity">
    <text evidence="1">Belongs to the bacterial ribosomal protein bL36 family.</text>
</comment>
<reference key="1">
    <citation type="journal article" date="2009" name="Appl. Environ. Microbiol.">
        <title>Rhizobium sp. strain NGR234 possesses a remarkable number of secretion systems.</title>
        <authorList>
            <person name="Schmeisser C."/>
            <person name="Liesegang H."/>
            <person name="Krysciak D."/>
            <person name="Bakkou N."/>
            <person name="Le Quere A."/>
            <person name="Wollherr A."/>
            <person name="Heinemeyer I."/>
            <person name="Morgenstern B."/>
            <person name="Pommerening-Roeser A."/>
            <person name="Flores M."/>
            <person name="Palacios R."/>
            <person name="Brenner S."/>
            <person name="Gottschalk G."/>
            <person name="Schmitz R.A."/>
            <person name="Broughton W.J."/>
            <person name="Perret X."/>
            <person name="Strittmatter A.W."/>
            <person name="Streit W.R."/>
        </authorList>
    </citation>
    <scope>NUCLEOTIDE SEQUENCE [LARGE SCALE GENOMIC DNA]</scope>
    <source>
        <strain>NBRC 101917 / NGR234</strain>
    </source>
</reference>
<accession>C3MIL5</accession>
<keyword id="KW-1185">Reference proteome</keyword>
<keyword id="KW-0687">Ribonucleoprotein</keyword>
<keyword id="KW-0689">Ribosomal protein</keyword>
<protein>
    <recommendedName>
        <fullName evidence="1">Large ribosomal subunit protein bL36</fullName>
    </recommendedName>
    <alternativeName>
        <fullName evidence="2">50S ribosomal protein L36</fullName>
    </alternativeName>
</protein>
<evidence type="ECO:0000255" key="1">
    <source>
        <dbReference type="HAMAP-Rule" id="MF_00251"/>
    </source>
</evidence>
<evidence type="ECO:0000305" key="2"/>
<proteinExistence type="inferred from homology"/>
<dbReference type="EMBL" id="CP001389">
    <property type="protein sequence ID" value="ACP26578.1"/>
    <property type="molecule type" value="Genomic_DNA"/>
</dbReference>
<dbReference type="RefSeq" id="YP_002827331.1">
    <property type="nucleotide sequence ID" value="NC_012587.1"/>
</dbReference>
<dbReference type="SMR" id="C3MIL5"/>
<dbReference type="STRING" id="394.NGR_c28320"/>
<dbReference type="KEGG" id="rhi:NGR_c28320"/>
<dbReference type="PATRIC" id="fig|394.7.peg.5668"/>
<dbReference type="eggNOG" id="COG0257">
    <property type="taxonomic scope" value="Bacteria"/>
</dbReference>
<dbReference type="HOGENOM" id="CLU_135723_3_2_5"/>
<dbReference type="OrthoDB" id="9801558at2"/>
<dbReference type="Proteomes" id="UP000001054">
    <property type="component" value="Chromosome"/>
</dbReference>
<dbReference type="GO" id="GO:1990904">
    <property type="term" value="C:ribonucleoprotein complex"/>
    <property type="evidence" value="ECO:0007669"/>
    <property type="project" value="UniProtKB-KW"/>
</dbReference>
<dbReference type="GO" id="GO:0005840">
    <property type="term" value="C:ribosome"/>
    <property type="evidence" value="ECO:0007669"/>
    <property type="project" value="UniProtKB-KW"/>
</dbReference>
<dbReference type="GO" id="GO:0003735">
    <property type="term" value="F:structural constituent of ribosome"/>
    <property type="evidence" value="ECO:0007669"/>
    <property type="project" value="InterPro"/>
</dbReference>
<dbReference type="GO" id="GO:0006412">
    <property type="term" value="P:translation"/>
    <property type="evidence" value="ECO:0007669"/>
    <property type="project" value="UniProtKB-UniRule"/>
</dbReference>
<dbReference type="HAMAP" id="MF_00251">
    <property type="entry name" value="Ribosomal_bL36"/>
    <property type="match status" value="1"/>
</dbReference>
<dbReference type="InterPro" id="IPR000473">
    <property type="entry name" value="Ribosomal_bL36"/>
</dbReference>
<dbReference type="InterPro" id="IPR035977">
    <property type="entry name" value="Ribosomal_bL36_sp"/>
</dbReference>
<dbReference type="InterPro" id="IPR047621">
    <property type="entry name" value="Ribosomal_L36_bact"/>
</dbReference>
<dbReference type="NCBIfam" id="NF002021">
    <property type="entry name" value="PRK00831.1"/>
    <property type="match status" value="1"/>
</dbReference>
<dbReference type="NCBIfam" id="TIGR01022">
    <property type="entry name" value="rpmJ_bact"/>
    <property type="match status" value="1"/>
</dbReference>
<dbReference type="PANTHER" id="PTHR47781">
    <property type="entry name" value="50S RIBOSOMAL PROTEIN L36 2"/>
    <property type="match status" value="1"/>
</dbReference>
<dbReference type="PANTHER" id="PTHR47781:SF1">
    <property type="entry name" value="LARGE RIBOSOMAL SUBUNIT PROTEIN BL36B"/>
    <property type="match status" value="1"/>
</dbReference>
<dbReference type="Pfam" id="PF00444">
    <property type="entry name" value="Ribosomal_L36"/>
    <property type="match status" value="1"/>
</dbReference>
<dbReference type="SUPFAM" id="SSF57840">
    <property type="entry name" value="Ribosomal protein L36"/>
    <property type="match status" value="1"/>
</dbReference>
<dbReference type="PROSITE" id="PS00828">
    <property type="entry name" value="RIBOSOMAL_L36"/>
    <property type="match status" value="1"/>
</dbReference>
<organism>
    <name type="scientific">Sinorhizobium fredii (strain NBRC 101917 / NGR234)</name>
    <dbReference type="NCBI Taxonomy" id="394"/>
    <lineage>
        <taxon>Bacteria</taxon>
        <taxon>Pseudomonadati</taxon>
        <taxon>Pseudomonadota</taxon>
        <taxon>Alphaproteobacteria</taxon>
        <taxon>Hyphomicrobiales</taxon>
        <taxon>Rhizobiaceae</taxon>
        <taxon>Sinorhizobium/Ensifer group</taxon>
        <taxon>Sinorhizobium</taxon>
    </lineage>
</organism>